<proteinExistence type="evidence at protein level"/>
<accession>P75429</accession>
<evidence type="ECO:0000250" key="1">
    <source>
        <dbReference type="UniProtKB" id="O31775"/>
    </source>
</evidence>
<evidence type="ECO:0000269" key="2">
    <source ref="2"/>
</evidence>
<evidence type="ECO:0000305" key="3"/>
<evidence type="ECO:0000305" key="4">
    <source ref="2"/>
</evidence>
<evidence type="ECO:0007744" key="5">
    <source>
        <dbReference type="PDB" id="1T71"/>
    </source>
</evidence>
<evidence type="ECO:0007829" key="6">
    <source>
        <dbReference type="PDB" id="1T71"/>
    </source>
</evidence>
<comment type="cofactor">
    <cofactor evidence="4">
        <name>Fe(3+)</name>
        <dbReference type="ChEBI" id="CHEBI:29034"/>
    </cofactor>
</comment>
<comment type="similarity">
    <text evidence="3">Belongs to the YmdB-like family.</text>
</comment>
<sequence length="281" mass="31431">MMNSIKFIFLGDVYGKAGRNIIKNNLAQLKSKYQADLVIVNAENTTHGKGLSLKHYEFLKEAGVNYITMGNHTWFQKLDLAVVINKKDLVRPLNLDTSFAFHNLGQGSLVFEFNKAKIRITNLLGTSVPLPFKTTNPFKVLKELILKRDCDLHIVDFHAETTSEKNAFCMAFDGYVTTIFGTHTHVPSADLRITPKGSAYITDVGMCGPGFGSVIGANPEQSIRLFCAGSREHFEVSKCGAQLNGVFFEVDVNTKKVIKTEAIRIVEDDPRYLKQDYFNLI</sequence>
<name>Y349_MYCPN</name>
<reference key="1">
    <citation type="journal article" date="1996" name="Nucleic Acids Res.">
        <title>Complete sequence analysis of the genome of the bacterium Mycoplasma pneumoniae.</title>
        <authorList>
            <person name="Himmelreich R."/>
            <person name="Hilbert H."/>
            <person name="Plagens H."/>
            <person name="Pirkl E."/>
            <person name="Li B.-C."/>
            <person name="Herrmann R."/>
        </authorList>
    </citation>
    <scope>NUCLEOTIDE SEQUENCE [LARGE SCALE GENOMIC DNA]</scope>
    <source>
        <strain>ATCC 29342 / M129 / Subtype 1</strain>
    </source>
</reference>
<reference evidence="5" key="2">
    <citation type="submission" date="2004-05" db="PDB data bank">
        <title>Crystal structure of a novel phosphatase from Mycoplasma pneumoniae.</title>
        <authorList>
            <person name="Shin D.H."/>
            <person name="Jancarik J."/>
            <person name="Kim R."/>
            <person name="Yokota H."/>
            <person name="Kim S.-H."/>
        </authorList>
    </citation>
    <scope>X-RAY CRYSTALLOGRAPHY (2.10 ANGSTROMS) IN COMPLEX WITH IRON</scope>
    <scope>COFACTOR</scope>
</reference>
<protein>
    <recommendedName>
        <fullName evidence="3">Putative phosphatase/phosphodiesterase MPN_349</fullName>
        <ecNumber evidence="3">3.1.-.-</ecNumber>
    </recommendedName>
</protein>
<feature type="chain" id="PRO_0000210486" description="Putative phosphatase/phosphodiesterase MPN_349">
    <location>
        <begin position="1"/>
        <end position="281"/>
    </location>
</feature>
<feature type="active site" description="Proton donor" evidence="1">
    <location>
        <position position="72"/>
    </location>
</feature>
<feature type="binding site" evidence="2 5">
    <location>
        <position position="12"/>
    </location>
    <ligand>
        <name>Fe cation</name>
        <dbReference type="ChEBI" id="CHEBI:24875"/>
        <label>1</label>
    </ligand>
</feature>
<feature type="binding site" evidence="2 5">
    <location>
        <position position="43"/>
    </location>
    <ligand>
        <name>Fe cation</name>
        <dbReference type="ChEBI" id="CHEBI:24875"/>
        <label>1</label>
    </ligand>
</feature>
<feature type="binding site" evidence="2 5">
    <location>
        <position position="43"/>
    </location>
    <ligand>
        <name>Fe cation</name>
        <dbReference type="ChEBI" id="CHEBI:24875"/>
        <label>2</label>
    </ligand>
</feature>
<feature type="binding site" evidence="2 5">
    <location>
        <position position="44"/>
    </location>
    <ligand>
        <name>Fe cation</name>
        <dbReference type="ChEBI" id="CHEBI:24875"/>
        <label>1</label>
    </ligand>
</feature>
<feature type="binding site" evidence="2 5">
    <location>
        <position position="71"/>
    </location>
    <ligand>
        <name>Fe cation</name>
        <dbReference type="ChEBI" id="CHEBI:24875"/>
        <label>2</label>
    </ligand>
</feature>
<feature type="binding site" evidence="2 5">
    <location>
        <position position="158"/>
    </location>
    <ligand>
        <name>Fe cation</name>
        <dbReference type="ChEBI" id="CHEBI:24875"/>
        <label>2</label>
    </ligand>
</feature>
<feature type="binding site" evidence="2 5">
    <location>
        <position position="183"/>
    </location>
    <ligand>
        <name>Fe cation</name>
        <dbReference type="ChEBI" id="CHEBI:24875"/>
        <label>2</label>
    </ligand>
</feature>
<feature type="binding site" evidence="2 5">
    <location>
        <position position="185"/>
    </location>
    <ligand>
        <name>Fe cation</name>
        <dbReference type="ChEBI" id="CHEBI:24875"/>
        <label>1</label>
    </ligand>
</feature>
<feature type="strand" evidence="6">
    <location>
        <begin position="6"/>
        <end position="10"/>
    </location>
</feature>
<feature type="strand" evidence="6">
    <location>
        <begin position="12"/>
        <end position="14"/>
    </location>
</feature>
<feature type="helix" evidence="6">
    <location>
        <begin position="15"/>
        <end position="23"/>
    </location>
</feature>
<feature type="helix" evidence="6">
    <location>
        <begin position="26"/>
        <end position="33"/>
    </location>
</feature>
<feature type="strand" evidence="6">
    <location>
        <begin position="36"/>
        <end position="41"/>
    </location>
</feature>
<feature type="turn" evidence="6">
    <location>
        <begin position="45"/>
        <end position="48"/>
    </location>
</feature>
<feature type="helix" evidence="6">
    <location>
        <begin position="53"/>
        <end position="62"/>
    </location>
</feature>
<feature type="strand" evidence="6">
    <location>
        <begin position="66"/>
        <end position="68"/>
    </location>
</feature>
<feature type="turn" evidence="6">
    <location>
        <begin position="71"/>
        <end position="74"/>
    </location>
</feature>
<feature type="helix" evidence="6">
    <location>
        <begin position="77"/>
        <end position="79"/>
    </location>
</feature>
<feature type="helix" evidence="6">
    <location>
        <begin position="80"/>
        <end position="83"/>
    </location>
</feature>
<feature type="turn" evidence="6">
    <location>
        <begin position="100"/>
        <end position="103"/>
    </location>
</feature>
<feature type="strand" evidence="6">
    <location>
        <begin position="104"/>
        <end position="112"/>
    </location>
</feature>
<feature type="strand" evidence="6">
    <location>
        <begin position="117"/>
        <end position="124"/>
    </location>
</feature>
<feature type="helix" evidence="6">
    <location>
        <begin position="137"/>
        <end position="145"/>
    </location>
</feature>
<feature type="strand" evidence="6">
    <location>
        <begin position="151"/>
        <end position="158"/>
    </location>
</feature>
<feature type="helix" evidence="6">
    <location>
        <begin position="162"/>
        <end position="172"/>
    </location>
</feature>
<feature type="turn" evidence="6">
    <location>
        <begin position="173"/>
        <end position="175"/>
    </location>
</feature>
<feature type="strand" evidence="6">
    <location>
        <begin position="176"/>
        <end position="186"/>
    </location>
</feature>
<feature type="strand" evidence="6">
    <location>
        <begin position="199"/>
        <end position="202"/>
    </location>
</feature>
<feature type="strand" evidence="6">
    <location>
        <begin position="206"/>
        <end position="208"/>
    </location>
</feature>
<feature type="helix" evidence="6">
    <location>
        <begin position="219"/>
        <end position="226"/>
    </location>
</feature>
<feature type="strand" evidence="6">
    <location>
        <begin position="241"/>
        <end position="249"/>
    </location>
</feature>
<feature type="turn" evidence="6">
    <location>
        <begin position="252"/>
        <end position="254"/>
    </location>
</feature>
<feature type="strand" evidence="6">
    <location>
        <begin position="259"/>
        <end position="267"/>
    </location>
</feature>
<feature type="helix" evidence="6">
    <location>
        <begin position="270"/>
        <end position="272"/>
    </location>
</feature>
<dbReference type="EC" id="3.1.-.-" evidence="3"/>
<dbReference type="EMBL" id="U00089">
    <property type="protein sequence ID" value="AAB96135.1"/>
    <property type="molecule type" value="Genomic_DNA"/>
</dbReference>
<dbReference type="PIR" id="S73813">
    <property type="entry name" value="S73813"/>
</dbReference>
<dbReference type="RefSeq" id="NP_110037.1">
    <property type="nucleotide sequence ID" value="NC_000912.1"/>
</dbReference>
<dbReference type="RefSeq" id="WP_010874705.1">
    <property type="nucleotide sequence ID" value="NZ_OU342337.1"/>
</dbReference>
<dbReference type="PDB" id="1T71">
    <property type="method" value="X-ray"/>
    <property type="resolution" value="2.10 A"/>
    <property type="chains" value="A=1-281"/>
</dbReference>
<dbReference type="PDBsum" id="1T71"/>
<dbReference type="SMR" id="P75429"/>
<dbReference type="IntAct" id="P75429">
    <property type="interactions" value="1"/>
</dbReference>
<dbReference type="STRING" id="272634.MPN_349"/>
<dbReference type="EnsemblBacteria" id="AAB96135">
    <property type="protein sequence ID" value="AAB96135"/>
    <property type="gene ID" value="MPN_349"/>
</dbReference>
<dbReference type="KEGG" id="mpn:MPN_349"/>
<dbReference type="PATRIC" id="fig|272634.6.peg.376"/>
<dbReference type="HOGENOM" id="CLU_068238_0_0_14"/>
<dbReference type="OrthoDB" id="9801109at2"/>
<dbReference type="BioCyc" id="MPNE272634:G1GJ3-551-MONOMER"/>
<dbReference type="EvolutionaryTrace" id="P75429"/>
<dbReference type="Proteomes" id="UP000000808">
    <property type="component" value="Chromosome"/>
</dbReference>
<dbReference type="GO" id="GO:0004113">
    <property type="term" value="F:2',3'-cyclic-nucleotide 3'-phosphodiesterase activity"/>
    <property type="evidence" value="ECO:0007669"/>
    <property type="project" value="TreeGrafter"/>
</dbReference>
<dbReference type="GO" id="GO:0046872">
    <property type="term" value="F:metal ion binding"/>
    <property type="evidence" value="ECO:0007669"/>
    <property type="project" value="UniProtKB-KW"/>
</dbReference>
<dbReference type="CDD" id="cd07382">
    <property type="entry name" value="MPP_DR1281"/>
    <property type="match status" value="1"/>
</dbReference>
<dbReference type="Gene3D" id="3.60.21.10">
    <property type="match status" value="1"/>
</dbReference>
<dbReference type="InterPro" id="IPR029052">
    <property type="entry name" value="Metallo-depent_PP-like"/>
</dbReference>
<dbReference type="InterPro" id="IPR005235">
    <property type="entry name" value="YmdB-like"/>
</dbReference>
<dbReference type="NCBIfam" id="TIGR00282">
    <property type="entry name" value="TIGR00282 family metallophosphoesterase"/>
    <property type="match status" value="1"/>
</dbReference>
<dbReference type="PANTHER" id="PTHR36303">
    <property type="entry name" value="2',3'-CYCLIC-NUCLEOTIDE 2'-PHOSPHODIESTERASE"/>
    <property type="match status" value="1"/>
</dbReference>
<dbReference type="PANTHER" id="PTHR36303:SF1">
    <property type="entry name" value="2',3'-CYCLIC-NUCLEOTIDE 2'-PHOSPHODIESTERASE"/>
    <property type="match status" value="1"/>
</dbReference>
<dbReference type="Pfam" id="PF13277">
    <property type="entry name" value="YmdB"/>
    <property type="match status" value="1"/>
</dbReference>
<dbReference type="PIRSF" id="PIRSF004789">
    <property type="entry name" value="DR1281"/>
    <property type="match status" value="1"/>
</dbReference>
<dbReference type="SUPFAM" id="SSF56300">
    <property type="entry name" value="Metallo-dependent phosphatases"/>
    <property type="match status" value="1"/>
</dbReference>
<keyword id="KW-0002">3D-structure</keyword>
<keyword id="KW-0378">Hydrolase</keyword>
<keyword id="KW-0408">Iron</keyword>
<keyword id="KW-0479">Metal-binding</keyword>
<keyword id="KW-1185">Reference proteome</keyword>
<organism>
    <name type="scientific">Mycoplasma pneumoniae (strain ATCC 29342 / M129 / Subtype 1)</name>
    <name type="common">Mycoplasmoides pneumoniae</name>
    <dbReference type="NCBI Taxonomy" id="272634"/>
    <lineage>
        <taxon>Bacteria</taxon>
        <taxon>Bacillati</taxon>
        <taxon>Mycoplasmatota</taxon>
        <taxon>Mycoplasmoidales</taxon>
        <taxon>Mycoplasmoidaceae</taxon>
        <taxon>Mycoplasmoides</taxon>
    </lineage>
</organism>
<gene>
    <name type="ordered locus">MPN_349</name>
    <name type="ORF">H91_orf281</name>
    <name type="ORF">MP487</name>
</gene>